<dbReference type="EC" id="4.2.1.20" evidence="1"/>
<dbReference type="EMBL" id="AE016877">
    <property type="protein sequence ID" value="AAP08222.1"/>
    <property type="molecule type" value="Genomic_DNA"/>
</dbReference>
<dbReference type="RefSeq" id="NP_831021.1">
    <property type="nucleotide sequence ID" value="NC_004722.1"/>
</dbReference>
<dbReference type="RefSeq" id="WP_001105014.1">
    <property type="nucleotide sequence ID" value="NC_004722.1"/>
</dbReference>
<dbReference type="SMR" id="Q81GG5"/>
<dbReference type="STRING" id="226900.BC_1237"/>
<dbReference type="MetOSite" id="Q81GG5"/>
<dbReference type="KEGG" id="bce:BC1237"/>
<dbReference type="PATRIC" id="fig|226900.8.peg.1208"/>
<dbReference type="HOGENOM" id="CLU_016734_3_1_9"/>
<dbReference type="OrthoDB" id="9766131at2"/>
<dbReference type="UniPathway" id="UPA00035">
    <property type="reaction ID" value="UER00044"/>
</dbReference>
<dbReference type="Proteomes" id="UP000001417">
    <property type="component" value="Chromosome"/>
</dbReference>
<dbReference type="GO" id="GO:0005737">
    <property type="term" value="C:cytoplasm"/>
    <property type="evidence" value="ECO:0000318"/>
    <property type="project" value="GO_Central"/>
</dbReference>
<dbReference type="GO" id="GO:0004834">
    <property type="term" value="F:tryptophan synthase activity"/>
    <property type="evidence" value="ECO:0007669"/>
    <property type="project" value="UniProtKB-UniRule"/>
</dbReference>
<dbReference type="GO" id="GO:0000162">
    <property type="term" value="P:L-tryptophan biosynthetic process"/>
    <property type="evidence" value="ECO:0000318"/>
    <property type="project" value="GO_Central"/>
</dbReference>
<dbReference type="CDD" id="cd06446">
    <property type="entry name" value="Trp-synth_B"/>
    <property type="match status" value="1"/>
</dbReference>
<dbReference type="FunFam" id="3.40.50.1100:FF:000001">
    <property type="entry name" value="Tryptophan synthase beta chain"/>
    <property type="match status" value="1"/>
</dbReference>
<dbReference type="FunFam" id="3.40.50.1100:FF:000004">
    <property type="entry name" value="Tryptophan synthase beta chain"/>
    <property type="match status" value="1"/>
</dbReference>
<dbReference type="Gene3D" id="3.40.50.1100">
    <property type="match status" value="2"/>
</dbReference>
<dbReference type="HAMAP" id="MF_00133">
    <property type="entry name" value="Trp_synth_beta"/>
    <property type="match status" value="1"/>
</dbReference>
<dbReference type="InterPro" id="IPR006653">
    <property type="entry name" value="Trp_synth_b_CS"/>
</dbReference>
<dbReference type="InterPro" id="IPR006654">
    <property type="entry name" value="Trp_synth_beta"/>
</dbReference>
<dbReference type="InterPro" id="IPR023026">
    <property type="entry name" value="Trp_synth_beta/beta-like"/>
</dbReference>
<dbReference type="InterPro" id="IPR001926">
    <property type="entry name" value="TrpB-like_PALP"/>
</dbReference>
<dbReference type="InterPro" id="IPR036052">
    <property type="entry name" value="TrpB-like_PALP_sf"/>
</dbReference>
<dbReference type="NCBIfam" id="TIGR00263">
    <property type="entry name" value="trpB"/>
    <property type="match status" value="1"/>
</dbReference>
<dbReference type="PANTHER" id="PTHR48077:SF3">
    <property type="entry name" value="TRYPTOPHAN SYNTHASE"/>
    <property type="match status" value="1"/>
</dbReference>
<dbReference type="PANTHER" id="PTHR48077">
    <property type="entry name" value="TRYPTOPHAN SYNTHASE-RELATED"/>
    <property type="match status" value="1"/>
</dbReference>
<dbReference type="Pfam" id="PF00291">
    <property type="entry name" value="PALP"/>
    <property type="match status" value="1"/>
</dbReference>
<dbReference type="PIRSF" id="PIRSF001413">
    <property type="entry name" value="Trp_syn_beta"/>
    <property type="match status" value="1"/>
</dbReference>
<dbReference type="SUPFAM" id="SSF53686">
    <property type="entry name" value="Tryptophan synthase beta subunit-like PLP-dependent enzymes"/>
    <property type="match status" value="1"/>
</dbReference>
<dbReference type="PROSITE" id="PS00168">
    <property type="entry name" value="TRP_SYNTHASE_BETA"/>
    <property type="match status" value="1"/>
</dbReference>
<evidence type="ECO:0000255" key="1">
    <source>
        <dbReference type="HAMAP-Rule" id="MF_00133"/>
    </source>
</evidence>
<sequence length="397" mass="43631">MNYAYPDEKGHYGIYGGRYVPETLMQSVLELEEAYKEAMQDEAFQKELNHYLKTYIGRETPLYYAENMTKYCGGAKIYLKREDLNHTGAHKINNTIGQALLAVRMGKKKVVAETGAGQHGVATATVCALLGLECVIFMGEEDVRRQKLNVFRMELLGAKVESVAAGSGTLKDAVNEALRYWVSHVHDTHYIMGSVLGPHPFPQIVRDFQSVIGNETKKQYEALEGKLPEAVVACIGGGSNAMGMFYPFVHDEEVALYGVEAAGKGVHTEKHAATLTKGSVGVLHGSMMYLLQNEEGQIQEAHSISAGLDYPGVGPEHSLLKDIGRVSYHSITDEEALEAFQLLTKKEGIIPALESSHAVAYALKLAPQMKKDEGLVICLSGRGDKDVESIKRYMEEV</sequence>
<gene>
    <name evidence="1" type="primary">trpB</name>
    <name type="ordered locus">BC_1237</name>
</gene>
<feature type="chain" id="PRO_0000098915" description="Tryptophan synthase beta chain">
    <location>
        <begin position="1"/>
        <end position="397"/>
    </location>
</feature>
<feature type="modified residue" description="N6-(pyridoxal phosphate)lysine" evidence="1">
    <location>
        <position position="91"/>
    </location>
</feature>
<protein>
    <recommendedName>
        <fullName evidence="1">Tryptophan synthase beta chain</fullName>
        <ecNumber evidence="1">4.2.1.20</ecNumber>
    </recommendedName>
</protein>
<comment type="function">
    <text evidence="1">The beta subunit is responsible for the synthesis of L-tryptophan from indole and L-serine.</text>
</comment>
<comment type="catalytic activity">
    <reaction evidence="1">
        <text>(1S,2R)-1-C-(indol-3-yl)glycerol 3-phosphate + L-serine = D-glyceraldehyde 3-phosphate + L-tryptophan + H2O</text>
        <dbReference type="Rhea" id="RHEA:10532"/>
        <dbReference type="ChEBI" id="CHEBI:15377"/>
        <dbReference type="ChEBI" id="CHEBI:33384"/>
        <dbReference type="ChEBI" id="CHEBI:57912"/>
        <dbReference type="ChEBI" id="CHEBI:58866"/>
        <dbReference type="ChEBI" id="CHEBI:59776"/>
        <dbReference type="EC" id="4.2.1.20"/>
    </reaction>
</comment>
<comment type="cofactor">
    <cofactor evidence="1">
        <name>pyridoxal 5'-phosphate</name>
        <dbReference type="ChEBI" id="CHEBI:597326"/>
    </cofactor>
</comment>
<comment type="pathway">
    <text evidence="1">Amino-acid biosynthesis; L-tryptophan biosynthesis; L-tryptophan from chorismate: step 5/5.</text>
</comment>
<comment type="subunit">
    <text evidence="1">Tetramer of two alpha and two beta chains.</text>
</comment>
<comment type="similarity">
    <text evidence="1">Belongs to the TrpB family.</text>
</comment>
<keyword id="KW-0028">Amino-acid biosynthesis</keyword>
<keyword id="KW-0057">Aromatic amino acid biosynthesis</keyword>
<keyword id="KW-0456">Lyase</keyword>
<keyword id="KW-0663">Pyridoxal phosphate</keyword>
<keyword id="KW-1185">Reference proteome</keyword>
<keyword id="KW-0822">Tryptophan biosynthesis</keyword>
<reference key="1">
    <citation type="journal article" date="2003" name="Nature">
        <title>Genome sequence of Bacillus cereus and comparative analysis with Bacillus anthracis.</title>
        <authorList>
            <person name="Ivanova N."/>
            <person name="Sorokin A."/>
            <person name="Anderson I."/>
            <person name="Galleron N."/>
            <person name="Candelon B."/>
            <person name="Kapatral V."/>
            <person name="Bhattacharyya A."/>
            <person name="Reznik G."/>
            <person name="Mikhailova N."/>
            <person name="Lapidus A."/>
            <person name="Chu L."/>
            <person name="Mazur M."/>
            <person name="Goltsman E."/>
            <person name="Larsen N."/>
            <person name="D'Souza M."/>
            <person name="Walunas T."/>
            <person name="Grechkin Y."/>
            <person name="Pusch G."/>
            <person name="Haselkorn R."/>
            <person name="Fonstein M."/>
            <person name="Ehrlich S.D."/>
            <person name="Overbeek R."/>
            <person name="Kyrpides N.C."/>
        </authorList>
    </citation>
    <scope>NUCLEOTIDE SEQUENCE [LARGE SCALE GENOMIC DNA]</scope>
    <source>
        <strain>ATCC 14579 / DSM 31 / CCUG 7414 / JCM 2152 / NBRC 15305 / NCIMB 9373 / NCTC 2599 / NRRL B-3711</strain>
    </source>
</reference>
<proteinExistence type="inferred from homology"/>
<name>TRPB_BACCR</name>
<accession>Q81GG5</accession>
<organism>
    <name type="scientific">Bacillus cereus (strain ATCC 14579 / DSM 31 / CCUG 7414 / JCM 2152 / NBRC 15305 / NCIMB 9373 / NCTC 2599 / NRRL B-3711)</name>
    <dbReference type="NCBI Taxonomy" id="226900"/>
    <lineage>
        <taxon>Bacteria</taxon>
        <taxon>Bacillati</taxon>
        <taxon>Bacillota</taxon>
        <taxon>Bacilli</taxon>
        <taxon>Bacillales</taxon>
        <taxon>Bacillaceae</taxon>
        <taxon>Bacillus</taxon>
        <taxon>Bacillus cereus group</taxon>
    </lineage>
</organism>